<accession>C0Q241</accession>
<protein>
    <recommendedName>
        <fullName evidence="1">D-serine dehydratase</fullName>
        <ecNumber evidence="1">4.3.1.18</ecNumber>
    </recommendedName>
    <alternativeName>
        <fullName evidence="1">D-serine deaminase</fullName>
        <shortName evidence="1">DSD</shortName>
    </alternativeName>
</protein>
<reference key="1">
    <citation type="journal article" date="2009" name="PLoS ONE">
        <title>Salmonella paratyphi C: genetic divergence from Salmonella choleraesuis and pathogenic convergence with Salmonella typhi.</title>
        <authorList>
            <person name="Liu W.-Q."/>
            <person name="Feng Y."/>
            <person name="Wang Y."/>
            <person name="Zou Q.-H."/>
            <person name="Chen F."/>
            <person name="Guo J.-T."/>
            <person name="Peng Y.-H."/>
            <person name="Jin Y."/>
            <person name="Li Y.-G."/>
            <person name="Hu S.-N."/>
            <person name="Johnston R.N."/>
            <person name="Liu G.-R."/>
            <person name="Liu S.-L."/>
        </authorList>
    </citation>
    <scope>NUCLEOTIDE SEQUENCE [LARGE SCALE GENOMIC DNA]</scope>
    <source>
        <strain>RKS4594</strain>
    </source>
</reference>
<gene>
    <name evidence="1" type="primary">dsdA</name>
    <name type="ordered locus">SPC_3885</name>
</gene>
<keyword id="KW-0456">Lyase</keyword>
<keyword id="KW-0663">Pyridoxal phosphate</keyword>
<proteinExistence type="inferred from homology"/>
<feature type="chain" id="PRO_1000149391" description="D-serine dehydratase">
    <location>
        <begin position="1"/>
        <end position="440"/>
    </location>
</feature>
<feature type="modified residue" description="N6-(pyridoxal phosphate)lysine" evidence="1">
    <location>
        <position position="116"/>
    </location>
</feature>
<name>SDHD_SALPC</name>
<comment type="catalytic activity">
    <reaction evidence="1">
        <text>D-serine = pyruvate + NH4(+)</text>
        <dbReference type="Rhea" id="RHEA:13977"/>
        <dbReference type="ChEBI" id="CHEBI:15361"/>
        <dbReference type="ChEBI" id="CHEBI:28938"/>
        <dbReference type="ChEBI" id="CHEBI:35247"/>
        <dbReference type="EC" id="4.3.1.18"/>
    </reaction>
</comment>
<comment type="cofactor">
    <cofactor evidence="1">
        <name>pyridoxal 5'-phosphate</name>
        <dbReference type="ChEBI" id="CHEBI:597326"/>
    </cofactor>
</comment>
<comment type="subunit">
    <text evidence="1">Monomer.</text>
</comment>
<comment type="similarity">
    <text evidence="1">Belongs to the serine/threonine dehydratase family. DsdA subfamily.</text>
</comment>
<organism>
    <name type="scientific">Salmonella paratyphi C (strain RKS4594)</name>
    <dbReference type="NCBI Taxonomy" id="476213"/>
    <lineage>
        <taxon>Bacteria</taxon>
        <taxon>Pseudomonadati</taxon>
        <taxon>Pseudomonadota</taxon>
        <taxon>Gammaproteobacteria</taxon>
        <taxon>Enterobacterales</taxon>
        <taxon>Enterobacteriaceae</taxon>
        <taxon>Salmonella</taxon>
    </lineage>
</organism>
<dbReference type="EC" id="4.3.1.18" evidence="1"/>
<dbReference type="EMBL" id="CP000857">
    <property type="protein sequence ID" value="ACN47957.1"/>
    <property type="molecule type" value="Genomic_DNA"/>
</dbReference>
<dbReference type="RefSeq" id="WP_000427990.1">
    <property type="nucleotide sequence ID" value="NC_012125.1"/>
</dbReference>
<dbReference type="SMR" id="C0Q241"/>
<dbReference type="KEGG" id="sei:SPC_3885"/>
<dbReference type="HOGENOM" id="CLU_035707_0_0_6"/>
<dbReference type="Proteomes" id="UP000001599">
    <property type="component" value="Chromosome"/>
</dbReference>
<dbReference type="GO" id="GO:0008721">
    <property type="term" value="F:D-serine ammonia-lyase activity"/>
    <property type="evidence" value="ECO:0007669"/>
    <property type="project" value="UniProtKB-EC"/>
</dbReference>
<dbReference type="GO" id="GO:0016836">
    <property type="term" value="F:hydro-lyase activity"/>
    <property type="evidence" value="ECO:0007669"/>
    <property type="project" value="UniProtKB-UniRule"/>
</dbReference>
<dbReference type="GO" id="GO:0030170">
    <property type="term" value="F:pyridoxal phosphate binding"/>
    <property type="evidence" value="ECO:0007669"/>
    <property type="project" value="InterPro"/>
</dbReference>
<dbReference type="GO" id="GO:0036088">
    <property type="term" value="P:D-serine catabolic process"/>
    <property type="evidence" value="ECO:0007669"/>
    <property type="project" value="TreeGrafter"/>
</dbReference>
<dbReference type="GO" id="GO:0009097">
    <property type="term" value="P:isoleucine biosynthetic process"/>
    <property type="evidence" value="ECO:0007669"/>
    <property type="project" value="TreeGrafter"/>
</dbReference>
<dbReference type="CDD" id="cd06447">
    <property type="entry name" value="D-Ser-dehyd"/>
    <property type="match status" value="1"/>
</dbReference>
<dbReference type="FunFam" id="3.40.50.1100:FF:000018">
    <property type="entry name" value="D-serine dehydratase"/>
    <property type="match status" value="1"/>
</dbReference>
<dbReference type="Gene3D" id="3.40.50.1100">
    <property type="match status" value="2"/>
</dbReference>
<dbReference type="HAMAP" id="MF_01030">
    <property type="entry name" value="D_Ser_dehydrat"/>
    <property type="match status" value="1"/>
</dbReference>
<dbReference type="InterPro" id="IPR011780">
    <property type="entry name" value="D_Ser_am_lyase"/>
</dbReference>
<dbReference type="InterPro" id="IPR050147">
    <property type="entry name" value="Ser/Thr_Dehydratase"/>
</dbReference>
<dbReference type="InterPro" id="IPR000634">
    <property type="entry name" value="Ser/Thr_deHydtase_PyrdxlP-BS"/>
</dbReference>
<dbReference type="InterPro" id="IPR001926">
    <property type="entry name" value="TrpB-like_PALP"/>
</dbReference>
<dbReference type="InterPro" id="IPR036052">
    <property type="entry name" value="TrpB-like_PALP_sf"/>
</dbReference>
<dbReference type="NCBIfam" id="TIGR02035">
    <property type="entry name" value="D_Ser_am_lyase"/>
    <property type="match status" value="1"/>
</dbReference>
<dbReference type="NCBIfam" id="NF002823">
    <property type="entry name" value="PRK02991.1"/>
    <property type="match status" value="1"/>
</dbReference>
<dbReference type="PANTHER" id="PTHR48078:SF9">
    <property type="entry name" value="D-SERINE DEHYDRATASE"/>
    <property type="match status" value="1"/>
</dbReference>
<dbReference type="PANTHER" id="PTHR48078">
    <property type="entry name" value="THREONINE DEHYDRATASE, MITOCHONDRIAL-RELATED"/>
    <property type="match status" value="1"/>
</dbReference>
<dbReference type="Pfam" id="PF00291">
    <property type="entry name" value="PALP"/>
    <property type="match status" value="1"/>
</dbReference>
<dbReference type="SUPFAM" id="SSF53686">
    <property type="entry name" value="Tryptophan synthase beta subunit-like PLP-dependent enzymes"/>
    <property type="match status" value="1"/>
</dbReference>
<dbReference type="PROSITE" id="PS00165">
    <property type="entry name" value="DEHYDRATASE_SER_THR"/>
    <property type="match status" value="1"/>
</dbReference>
<sequence length="440" mass="47354">MENIQKLIARYPLVEDLVALKETTWFNPGATSLAQGLPYVGLTEQDVNAAHDRLARFAPYLAKAFPQTAAAGGMIESDVVAIPAMQKRLEKEYGQTIDGEMLLKKDSHLAISGSIKARGGIYEVLTHAEKLALEAGLLTTDDDYSVLLSPEFKQFFSQYSIAVGSTGNLGLSIGIMSACIGFKVTVHMSADARAWKKAKLRSHGVTVVEYEDDYGVAVEQGRKAAQSDPNCFFIDDENSRTLFLGYAVAGQRLKAQFAQQGRVVDASHPLFVYLPCGVGGGPGGVAFGLKLAFGDNVHCFFAEPTHSPCMLLGVYTGLHDAISVQDIGIDNLTAADGLAVGRASGFVGRAMERLLDGLYTLDDQTMYDMLGWLAQEEGIRLEPSALAGMAGPQRICAAVAYQQRHGFSQTQLGNATHLVWATGGGMVPEDEMEQYLAKGR</sequence>
<evidence type="ECO:0000255" key="1">
    <source>
        <dbReference type="HAMAP-Rule" id="MF_01030"/>
    </source>
</evidence>